<organismHost>
    <name type="scientific">Aves</name>
    <dbReference type="NCBI Taxonomy" id="8782"/>
</organismHost>
<organismHost>
    <name type="scientific">Felis catus</name>
    <name type="common">Cat</name>
    <name type="synonym">Felis silvestris catus</name>
    <dbReference type="NCBI Taxonomy" id="9685"/>
</organismHost>
<organismHost>
    <name type="scientific">Homo sapiens</name>
    <name type="common">Human</name>
    <dbReference type="NCBI Taxonomy" id="9606"/>
</organismHost>
<organismHost>
    <name type="scientific">Panthera pardus</name>
    <name type="common">Leopard</name>
    <name type="synonym">Felis pardus</name>
    <dbReference type="NCBI Taxonomy" id="9691"/>
</organismHost>
<organismHost>
    <name type="scientific">Panthera tigris</name>
    <name type="common">Tiger</name>
    <dbReference type="NCBI Taxonomy" id="9694"/>
</organismHost>
<organismHost>
    <name type="scientific">Sus scrofa</name>
    <name type="common">Pig</name>
    <dbReference type="NCBI Taxonomy" id="9823"/>
</organismHost>
<evidence type="ECO:0000255" key="1">
    <source>
        <dbReference type="HAMAP-Rule" id="MF_04069"/>
    </source>
</evidence>
<evidence type="ECO:0000256" key="2">
    <source>
        <dbReference type="SAM" id="MobiDB-lite"/>
    </source>
</evidence>
<name>M2_I01A1</name>
<sequence>MSLLTEVETPTRNEWECRCSGSSDPLVVAASIIGILHLILWILDRLFFKCIYRRLKYGLKRGPSTEGVPESMREEYRQEQQNAVDVDDGHFVNIELE</sequence>
<gene>
    <name evidence="1" type="primary">M</name>
</gene>
<accession>P0C5T1</accession>
<comment type="function">
    <text evidence="1">Forms a proton-selective ion channel that is necessary for the efficient release of the viral genome during virus entry. After attaching to the cell surface, the virion enters the cell by endocytosis. Acidification of the endosome triggers M2 ion channel activity. The influx of protons into virion interior is believed to disrupt interactions between the viral ribonucleoprotein (RNP), matrix protein 1 (M1), and lipid bilayers, thereby freeing the viral genome from interaction with viral proteins and enabling RNA segments to migrate to the host cell nucleus, where influenza virus RNA transcription and replication occur. Also plays a role in viral proteins secretory pathway. Elevates the intravesicular pH of normally acidic compartments, such as trans-Golgi network, preventing newly formed hemagglutinin from premature switching to the fusion-active conformation.</text>
</comment>
<comment type="activity regulation">
    <text>The M2 protein from most influenza A strains is inhibited by amantadine and rimantadine, resulting in viral uncoating incapacity. Emergence of amantadine-resistant variants is usually rapid.</text>
</comment>
<comment type="subunit">
    <text evidence="1">Homotetramer; composed of two disulfide-linked dimers held together by non-covalent interactions. May interact with matrix protein 1.</text>
</comment>
<comment type="subcellular location">
    <subcellularLocation>
        <location evidence="1">Virion membrane</location>
    </subcellularLocation>
    <subcellularLocation>
        <location evidence="1">Host apical cell membrane</location>
        <topology evidence="1">Single-pass type III membrane protein</topology>
    </subcellularLocation>
    <text evidence="1">Abundantly expressed at the apical plasma membrane in infected polarized epithelial cells, in close proximity to budding and assembled virions. Minor component of virions (only 16-20 molecules/virion).</text>
</comment>
<comment type="alternative products">
    <event type="alternative splicing"/>
    <isoform>
        <id>P0C5T1-1</id>
        <name>M2</name>
        <sequence type="displayed"/>
    </isoform>
    <isoform>
        <id>Q80A06-1</id>
        <name>M1</name>
        <sequence type="external"/>
    </isoform>
    <text>Only the first 9 residues are shared by the 2 isoforms.</text>
</comment>
<comment type="domain">
    <text evidence="1">Cytoplasmic tail plays an important role in virion assembly and morphogenesis.</text>
</comment>
<comment type="miscellaneous">
    <text evidence="1">When the channel is activated, one or more imidazole moieties of His-37 probably become bi-protonated.</text>
</comment>
<comment type="similarity">
    <text evidence="1">Belongs to the influenza viruses matrix protein M2 family.</text>
</comment>
<proteinExistence type="inferred from homology"/>
<dbReference type="EMBL" id="AF509041">
    <property type="status" value="NOT_ANNOTATED_CDS"/>
    <property type="molecule type" value="Genomic_DNA"/>
</dbReference>
<dbReference type="SMR" id="P0C5T1"/>
<dbReference type="IntAct" id="P0C5T1">
    <property type="interactions" value="1"/>
</dbReference>
<dbReference type="GO" id="GO:0020002">
    <property type="term" value="C:host cell plasma membrane"/>
    <property type="evidence" value="ECO:0007669"/>
    <property type="project" value="UniProtKB-SubCell"/>
</dbReference>
<dbReference type="GO" id="GO:0016020">
    <property type="term" value="C:membrane"/>
    <property type="evidence" value="ECO:0007669"/>
    <property type="project" value="UniProtKB-UniRule"/>
</dbReference>
<dbReference type="GO" id="GO:0055036">
    <property type="term" value="C:virion membrane"/>
    <property type="evidence" value="ECO:0007669"/>
    <property type="project" value="UniProtKB-SubCell"/>
</dbReference>
<dbReference type="GO" id="GO:0005216">
    <property type="term" value="F:monoatomic ion channel activity"/>
    <property type="evidence" value="ECO:0007669"/>
    <property type="project" value="UniProtKB-UniRule"/>
</dbReference>
<dbReference type="GO" id="GO:0015078">
    <property type="term" value="F:proton transmembrane transporter activity"/>
    <property type="evidence" value="ECO:0007669"/>
    <property type="project" value="UniProtKB-UniRule"/>
</dbReference>
<dbReference type="GO" id="GO:0051259">
    <property type="term" value="P:protein complex oligomerization"/>
    <property type="evidence" value="ECO:0007669"/>
    <property type="project" value="UniProtKB-UniRule"/>
</dbReference>
<dbReference type="GO" id="GO:0044694">
    <property type="term" value="P:symbiont genome entry into host cell via pore formation in plasma membrane"/>
    <property type="evidence" value="ECO:0007669"/>
    <property type="project" value="UniProtKB-UniRule"/>
</dbReference>
<dbReference type="GO" id="GO:0140321">
    <property type="term" value="P:symbiont-mediated suppression of host autophagy"/>
    <property type="evidence" value="ECO:0007669"/>
    <property type="project" value="UniProtKB-KW"/>
</dbReference>
<dbReference type="Gene3D" id="6.10.250.1640">
    <property type="match status" value="1"/>
</dbReference>
<dbReference type="HAMAP" id="MF_04069">
    <property type="entry name" value="INFV_M2"/>
    <property type="match status" value="1"/>
</dbReference>
<dbReference type="InterPro" id="IPR002089">
    <property type="entry name" value="Flu_M2"/>
</dbReference>
<dbReference type="Pfam" id="PF00599">
    <property type="entry name" value="Flu_M2"/>
    <property type="match status" value="1"/>
</dbReference>
<keyword id="KW-0025">Alternative splicing</keyword>
<keyword id="KW-1015">Disulfide bond</keyword>
<keyword id="KW-1032">Host cell membrane</keyword>
<keyword id="KW-1043">Host membrane</keyword>
<keyword id="KW-0945">Host-virus interaction</keyword>
<keyword id="KW-0375">Hydrogen ion transport</keyword>
<keyword id="KW-1083">Inhibition of host autophagy by virus</keyword>
<keyword id="KW-0407">Ion channel</keyword>
<keyword id="KW-0406">Ion transport</keyword>
<keyword id="KW-0449">Lipoprotein</keyword>
<keyword id="KW-0472">Membrane</keyword>
<keyword id="KW-0564">Palmitate</keyword>
<keyword id="KW-0597">Phosphoprotein</keyword>
<keyword id="KW-0735">Signal-anchor</keyword>
<keyword id="KW-0812">Transmembrane</keyword>
<keyword id="KW-1133">Transmembrane helix</keyword>
<keyword id="KW-0813">Transport</keyword>
<keyword id="KW-1182">Viral ion channel</keyword>
<keyword id="KW-0946">Virion</keyword>
<protein>
    <recommendedName>
        <fullName evidence="1">Matrix protein 2</fullName>
    </recommendedName>
    <alternativeName>
        <fullName evidence="1">Proton channel protein M2</fullName>
    </alternativeName>
</protein>
<organism>
    <name type="scientific">Influenza A virus (strain A/Chicken/Hong Kong/YU562/2001 H5N1 genotype B)</name>
    <dbReference type="NCBI Taxonomy" id="196426"/>
    <lineage>
        <taxon>Viruses</taxon>
        <taxon>Riboviria</taxon>
        <taxon>Orthornavirae</taxon>
        <taxon>Negarnaviricota</taxon>
        <taxon>Polyploviricotina</taxon>
        <taxon>Insthoviricetes</taxon>
        <taxon>Articulavirales</taxon>
        <taxon>Orthomyxoviridae</taxon>
        <taxon>Alphainfluenzavirus</taxon>
        <taxon>Alphainfluenzavirus influenzae</taxon>
        <taxon>Influenza A virus</taxon>
    </lineage>
</organism>
<reference key="1">
    <citation type="journal article" date="2002" name="Proc. Natl. Acad. Sci. U.S.A.">
        <title>Emergence of multiple genotypes of H5N1 avian influenza viruses in Hong Kong SAR.</title>
        <authorList>
            <person name="Guan Y."/>
            <person name="Peiris J.S.M."/>
            <person name="Lipatov A.S."/>
            <person name="Ellis T.M."/>
            <person name="Dyrting K.C."/>
            <person name="Krauss S."/>
            <person name="Zhang L.J."/>
            <person name="Webster R.G."/>
            <person name="Shortridge K.F."/>
        </authorList>
    </citation>
    <scope>NUCLEOTIDE SEQUENCE [GENOMIC RNA]</scope>
</reference>
<feature type="chain" id="PRO_0000311623" description="Matrix protein 2">
    <location>
        <begin position="1"/>
        <end position="97"/>
    </location>
</feature>
<feature type="topological domain" description="Virion surface" evidence="1">
    <location>
        <begin position="1"/>
        <end position="22"/>
    </location>
</feature>
<feature type="transmembrane region" description="Helical; Signal-anchor for type III membrane protein" evidence="1">
    <location>
        <begin position="23"/>
        <end position="43"/>
    </location>
</feature>
<feature type="topological domain" description="Intravirion" evidence="1">
    <location>
        <begin position="44"/>
        <end position="97"/>
    </location>
</feature>
<feature type="region of interest" description="Disordered" evidence="2">
    <location>
        <begin position="60"/>
        <end position="80"/>
    </location>
</feature>
<feature type="site" description="Essential for channel activity, possibly by being protonated during channel activation, and by forming the channel gate and the selective filter" evidence="1">
    <location>
        <position position="37"/>
    </location>
</feature>
<feature type="site" description="Seems to be involved in pH gating" evidence="1">
    <location>
        <position position="41"/>
    </location>
</feature>
<feature type="modified residue" description="Phosphoserine; by host" evidence="1">
    <location>
        <position position="64"/>
    </location>
</feature>
<feature type="lipid moiety-binding region" description="S-palmitoyl cysteine; by host" evidence="1">
    <location>
        <position position="50"/>
    </location>
</feature>
<feature type="disulfide bond" description="Interchain (with C-17)" evidence="1">
    <location>
        <position position="17"/>
    </location>
</feature>
<feature type="disulfide bond" description="Interchain (with C-19)" evidence="1">
    <location>
        <position position="19"/>
    </location>
</feature>